<proteinExistence type="inferred from homology"/>
<feature type="chain" id="PRO_0000249981" description="Anhydro-N-acetylmuramic acid kinase">
    <location>
        <begin position="1"/>
        <end position="373"/>
    </location>
</feature>
<feature type="binding site" evidence="1">
    <location>
        <begin position="13"/>
        <end position="20"/>
    </location>
    <ligand>
        <name>ATP</name>
        <dbReference type="ChEBI" id="CHEBI:30616"/>
    </ligand>
</feature>
<name>ANMK_BRUA2</name>
<sequence>MPDLKRAIGLMSGTSMDGIDIALLATDGENWIERRASASMDYSDGFRARLKAGLVDARAIKDRAERPGLLRQLEHDLTLLHAVAVHDFLHEQGLQPHEIDVIGFHGQTVLHRPNESLTVQIGDGALLARETGIPVVYDMRAEDMRHGGQGAPLIPAYHAALAANLPLGLKGPVVFVNIGGISNLTYVGEDGALIAYDSGPGNMLIDQWMELHGHGRFDPGGATAMSGSVDRNTAHRYLEHEFFKGNHRRSLDRGDFAIPAKGELNLADGARTLAFVSAAAILKSASHLPARPRTYVVSGGGRKNGALMDELTALAEREGAHVIDADNAGFDGDAMEAEAWAYLAVRSLCGLPLTYPSTTGCDKPVSGGVPVRP</sequence>
<gene>
    <name evidence="1" type="primary">anmK</name>
    <name type="ordered locus">BAB1_0944</name>
</gene>
<comment type="function">
    <text evidence="1">Catalyzes the specific phosphorylation of 1,6-anhydro-N-acetylmuramic acid (anhMurNAc) with the simultaneous cleavage of the 1,6-anhydro ring, generating MurNAc-6-P. Is required for the utilization of anhMurNAc either imported from the medium or derived from its own cell wall murein, and thus plays a role in cell wall recycling.</text>
</comment>
<comment type="catalytic activity">
    <reaction evidence="1">
        <text>1,6-anhydro-N-acetyl-beta-muramate + ATP + H2O = N-acetyl-D-muramate 6-phosphate + ADP + H(+)</text>
        <dbReference type="Rhea" id="RHEA:24952"/>
        <dbReference type="ChEBI" id="CHEBI:15377"/>
        <dbReference type="ChEBI" id="CHEBI:15378"/>
        <dbReference type="ChEBI" id="CHEBI:30616"/>
        <dbReference type="ChEBI" id="CHEBI:58690"/>
        <dbReference type="ChEBI" id="CHEBI:58722"/>
        <dbReference type="ChEBI" id="CHEBI:456216"/>
        <dbReference type="EC" id="2.7.1.170"/>
    </reaction>
</comment>
<comment type="pathway">
    <text evidence="1">Amino-sugar metabolism; 1,6-anhydro-N-acetylmuramate degradation.</text>
</comment>
<comment type="pathway">
    <text evidence="1">Cell wall biogenesis; peptidoglycan recycling.</text>
</comment>
<comment type="similarity">
    <text evidence="1">Belongs to the anhydro-N-acetylmuramic acid kinase family.</text>
</comment>
<organism>
    <name type="scientific">Brucella abortus (strain 2308)</name>
    <dbReference type="NCBI Taxonomy" id="359391"/>
    <lineage>
        <taxon>Bacteria</taxon>
        <taxon>Pseudomonadati</taxon>
        <taxon>Pseudomonadota</taxon>
        <taxon>Alphaproteobacteria</taxon>
        <taxon>Hyphomicrobiales</taxon>
        <taxon>Brucellaceae</taxon>
        <taxon>Brucella/Ochrobactrum group</taxon>
        <taxon>Brucella</taxon>
    </lineage>
</organism>
<keyword id="KW-0067">ATP-binding</keyword>
<keyword id="KW-0119">Carbohydrate metabolism</keyword>
<keyword id="KW-0418">Kinase</keyword>
<keyword id="KW-0547">Nucleotide-binding</keyword>
<keyword id="KW-1185">Reference proteome</keyword>
<keyword id="KW-0808">Transferase</keyword>
<accession>Q2YNQ9</accession>
<dbReference type="EC" id="2.7.1.170" evidence="1"/>
<dbReference type="EMBL" id="AM040264">
    <property type="protein sequence ID" value="CAJ10900.1"/>
    <property type="molecule type" value="Genomic_DNA"/>
</dbReference>
<dbReference type="RefSeq" id="WP_002964051.1">
    <property type="nucleotide sequence ID" value="NZ_KN046823.1"/>
</dbReference>
<dbReference type="SMR" id="Q2YNQ9"/>
<dbReference type="STRING" id="359391.BAB1_0944"/>
<dbReference type="KEGG" id="bmf:BAB1_0944"/>
<dbReference type="PATRIC" id="fig|359391.11.peg.3260"/>
<dbReference type="HOGENOM" id="CLU_038782_3_0_5"/>
<dbReference type="PhylomeDB" id="Q2YNQ9"/>
<dbReference type="UniPathway" id="UPA00343"/>
<dbReference type="UniPathway" id="UPA00544"/>
<dbReference type="Proteomes" id="UP000002719">
    <property type="component" value="Chromosome I"/>
</dbReference>
<dbReference type="GO" id="GO:0005524">
    <property type="term" value="F:ATP binding"/>
    <property type="evidence" value="ECO:0007669"/>
    <property type="project" value="UniProtKB-UniRule"/>
</dbReference>
<dbReference type="GO" id="GO:0016301">
    <property type="term" value="F:kinase activity"/>
    <property type="evidence" value="ECO:0007669"/>
    <property type="project" value="UniProtKB-KW"/>
</dbReference>
<dbReference type="GO" id="GO:0016773">
    <property type="term" value="F:phosphotransferase activity, alcohol group as acceptor"/>
    <property type="evidence" value="ECO:0007669"/>
    <property type="project" value="UniProtKB-UniRule"/>
</dbReference>
<dbReference type="GO" id="GO:0097175">
    <property type="term" value="P:1,6-anhydro-N-acetyl-beta-muramic acid catabolic process"/>
    <property type="evidence" value="ECO:0007669"/>
    <property type="project" value="UniProtKB-UniRule"/>
</dbReference>
<dbReference type="GO" id="GO:0006040">
    <property type="term" value="P:amino sugar metabolic process"/>
    <property type="evidence" value="ECO:0007669"/>
    <property type="project" value="InterPro"/>
</dbReference>
<dbReference type="GO" id="GO:0009254">
    <property type="term" value="P:peptidoglycan turnover"/>
    <property type="evidence" value="ECO:0007669"/>
    <property type="project" value="UniProtKB-UniRule"/>
</dbReference>
<dbReference type="Gene3D" id="3.30.420.40">
    <property type="match status" value="2"/>
</dbReference>
<dbReference type="HAMAP" id="MF_01270">
    <property type="entry name" value="AnhMurNAc_kinase"/>
    <property type="match status" value="1"/>
</dbReference>
<dbReference type="InterPro" id="IPR005338">
    <property type="entry name" value="Anhydro_N_Ac-Mur_kinase"/>
</dbReference>
<dbReference type="InterPro" id="IPR043129">
    <property type="entry name" value="ATPase_NBD"/>
</dbReference>
<dbReference type="NCBIfam" id="NF007141">
    <property type="entry name" value="PRK09585.1-5"/>
    <property type="match status" value="1"/>
</dbReference>
<dbReference type="PANTHER" id="PTHR30605">
    <property type="entry name" value="ANHYDRO-N-ACETYLMURAMIC ACID KINASE"/>
    <property type="match status" value="1"/>
</dbReference>
<dbReference type="PANTHER" id="PTHR30605:SF0">
    <property type="entry name" value="ANHYDRO-N-ACETYLMURAMIC ACID KINASE"/>
    <property type="match status" value="1"/>
</dbReference>
<dbReference type="Pfam" id="PF03702">
    <property type="entry name" value="AnmK"/>
    <property type="match status" value="1"/>
</dbReference>
<dbReference type="SUPFAM" id="SSF53067">
    <property type="entry name" value="Actin-like ATPase domain"/>
    <property type="match status" value="1"/>
</dbReference>
<protein>
    <recommendedName>
        <fullName evidence="1">Anhydro-N-acetylmuramic acid kinase</fullName>
        <ecNumber evidence="1">2.7.1.170</ecNumber>
    </recommendedName>
    <alternativeName>
        <fullName evidence="1">AnhMurNAc kinase</fullName>
    </alternativeName>
</protein>
<evidence type="ECO:0000255" key="1">
    <source>
        <dbReference type="HAMAP-Rule" id="MF_01270"/>
    </source>
</evidence>
<reference key="1">
    <citation type="journal article" date="2005" name="Infect. Immun.">
        <title>Whole-genome analyses of speciation events in pathogenic Brucellae.</title>
        <authorList>
            <person name="Chain P.S."/>
            <person name="Comerci D.J."/>
            <person name="Tolmasky M.E."/>
            <person name="Larimer F.W."/>
            <person name="Malfatti S.A."/>
            <person name="Vergez L.M."/>
            <person name="Aguero F."/>
            <person name="Land M.L."/>
            <person name="Ugalde R.A."/>
            <person name="Garcia E."/>
        </authorList>
    </citation>
    <scope>NUCLEOTIDE SEQUENCE [LARGE SCALE GENOMIC DNA]</scope>
    <source>
        <strain>2308</strain>
    </source>
</reference>